<name>ACCA_ECOSM</name>
<protein>
    <recommendedName>
        <fullName evidence="1">Acetyl-coenzyme A carboxylase carboxyl transferase subunit alpha</fullName>
        <shortName evidence="1">ACCase subunit alpha</shortName>
        <shortName evidence="1">Acetyl-CoA carboxylase carboxyltransferase subunit alpha</shortName>
        <ecNumber evidence="1">2.1.3.15</ecNumber>
    </recommendedName>
</protein>
<organism>
    <name type="scientific">Escherichia coli (strain SMS-3-5 / SECEC)</name>
    <dbReference type="NCBI Taxonomy" id="439855"/>
    <lineage>
        <taxon>Bacteria</taxon>
        <taxon>Pseudomonadati</taxon>
        <taxon>Pseudomonadota</taxon>
        <taxon>Gammaproteobacteria</taxon>
        <taxon>Enterobacterales</taxon>
        <taxon>Enterobacteriaceae</taxon>
        <taxon>Escherichia</taxon>
    </lineage>
</organism>
<accession>B1LGY7</accession>
<keyword id="KW-0067">ATP-binding</keyword>
<keyword id="KW-0963">Cytoplasm</keyword>
<keyword id="KW-0275">Fatty acid biosynthesis</keyword>
<keyword id="KW-0276">Fatty acid metabolism</keyword>
<keyword id="KW-0444">Lipid biosynthesis</keyword>
<keyword id="KW-0443">Lipid metabolism</keyword>
<keyword id="KW-0547">Nucleotide-binding</keyword>
<keyword id="KW-0808">Transferase</keyword>
<comment type="function">
    <text evidence="1">Component of the acetyl coenzyme A carboxylase (ACC) complex. First, biotin carboxylase catalyzes the carboxylation of biotin on its carrier protein (BCCP) and then the CO(2) group is transferred by the carboxyltransferase to acetyl-CoA to form malonyl-CoA.</text>
</comment>
<comment type="catalytic activity">
    <reaction evidence="1">
        <text>N(6)-carboxybiotinyl-L-lysyl-[protein] + acetyl-CoA = N(6)-biotinyl-L-lysyl-[protein] + malonyl-CoA</text>
        <dbReference type="Rhea" id="RHEA:54728"/>
        <dbReference type="Rhea" id="RHEA-COMP:10505"/>
        <dbReference type="Rhea" id="RHEA-COMP:10506"/>
        <dbReference type="ChEBI" id="CHEBI:57288"/>
        <dbReference type="ChEBI" id="CHEBI:57384"/>
        <dbReference type="ChEBI" id="CHEBI:83144"/>
        <dbReference type="ChEBI" id="CHEBI:83145"/>
        <dbReference type="EC" id="2.1.3.15"/>
    </reaction>
</comment>
<comment type="pathway">
    <text evidence="1">Lipid metabolism; malonyl-CoA biosynthesis; malonyl-CoA from acetyl-CoA: step 1/1.</text>
</comment>
<comment type="subunit">
    <text evidence="1">Acetyl-CoA carboxylase is a heterohexamer composed of biotin carboxyl carrier protein (AccB), biotin carboxylase (AccC) and two subunits each of ACCase subunit alpha (AccA) and ACCase subunit beta (AccD).</text>
</comment>
<comment type="subcellular location">
    <subcellularLocation>
        <location evidence="1">Cytoplasm</location>
    </subcellularLocation>
</comment>
<comment type="similarity">
    <text evidence="1">Belongs to the AccA family.</text>
</comment>
<dbReference type="EC" id="2.1.3.15" evidence="1"/>
<dbReference type="EMBL" id="CP000970">
    <property type="protein sequence ID" value="ACB18754.1"/>
    <property type="molecule type" value="Genomic_DNA"/>
</dbReference>
<dbReference type="RefSeq" id="WP_000055746.1">
    <property type="nucleotide sequence ID" value="NC_010498.1"/>
</dbReference>
<dbReference type="SMR" id="B1LGY7"/>
<dbReference type="GeneID" id="86862695"/>
<dbReference type="KEGG" id="ecm:EcSMS35_0196"/>
<dbReference type="HOGENOM" id="CLU_015486_0_2_6"/>
<dbReference type="UniPathway" id="UPA00655">
    <property type="reaction ID" value="UER00711"/>
</dbReference>
<dbReference type="Proteomes" id="UP000007011">
    <property type="component" value="Chromosome"/>
</dbReference>
<dbReference type="GO" id="GO:0009317">
    <property type="term" value="C:acetyl-CoA carboxylase complex"/>
    <property type="evidence" value="ECO:0007669"/>
    <property type="project" value="InterPro"/>
</dbReference>
<dbReference type="GO" id="GO:0003989">
    <property type="term" value="F:acetyl-CoA carboxylase activity"/>
    <property type="evidence" value="ECO:0007669"/>
    <property type="project" value="InterPro"/>
</dbReference>
<dbReference type="GO" id="GO:0005524">
    <property type="term" value="F:ATP binding"/>
    <property type="evidence" value="ECO:0007669"/>
    <property type="project" value="UniProtKB-KW"/>
</dbReference>
<dbReference type="GO" id="GO:0016743">
    <property type="term" value="F:carboxyl- or carbamoyltransferase activity"/>
    <property type="evidence" value="ECO:0007669"/>
    <property type="project" value="UniProtKB-UniRule"/>
</dbReference>
<dbReference type="GO" id="GO:0006633">
    <property type="term" value="P:fatty acid biosynthetic process"/>
    <property type="evidence" value="ECO:0007669"/>
    <property type="project" value="UniProtKB-KW"/>
</dbReference>
<dbReference type="GO" id="GO:2001295">
    <property type="term" value="P:malonyl-CoA biosynthetic process"/>
    <property type="evidence" value="ECO:0007669"/>
    <property type="project" value="UniProtKB-UniRule"/>
</dbReference>
<dbReference type="FunFam" id="3.90.226.10:FF:000008">
    <property type="entry name" value="Acetyl-coenzyme A carboxylase carboxyl transferase subunit alpha"/>
    <property type="match status" value="1"/>
</dbReference>
<dbReference type="Gene3D" id="3.90.226.10">
    <property type="entry name" value="2-enoyl-CoA Hydratase, Chain A, domain 1"/>
    <property type="match status" value="1"/>
</dbReference>
<dbReference type="HAMAP" id="MF_00823">
    <property type="entry name" value="AcetylCoA_CT_alpha"/>
    <property type="match status" value="1"/>
</dbReference>
<dbReference type="InterPro" id="IPR001095">
    <property type="entry name" value="Acetyl_CoA_COase_a_su"/>
</dbReference>
<dbReference type="InterPro" id="IPR029045">
    <property type="entry name" value="ClpP/crotonase-like_dom_sf"/>
</dbReference>
<dbReference type="InterPro" id="IPR011763">
    <property type="entry name" value="COA_CT_C"/>
</dbReference>
<dbReference type="NCBIfam" id="TIGR00513">
    <property type="entry name" value="accA"/>
    <property type="match status" value="1"/>
</dbReference>
<dbReference type="NCBIfam" id="NF041504">
    <property type="entry name" value="AccA_sub"/>
    <property type="match status" value="1"/>
</dbReference>
<dbReference type="NCBIfam" id="NF004344">
    <property type="entry name" value="PRK05724.1"/>
    <property type="match status" value="1"/>
</dbReference>
<dbReference type="PANTHER" id="PTHR42853">
    <property type="entry name" value="ACETYL-COENZYME A CARBOXYLASE CARBOXYL TRANSFERASE SUBUNIT ALPHA"/>
    <property type="match status" value="1"/>
</dbReference>
<dbReference type="PANTHER" id="PTHR42853:SF3">
    <property type="entry name" value="ACETYL-COENZYME A CARBOXYLASE CARBOXYL TRANSFERASE SUBUNIT ALPHA, CHLOROPLASTIC"/>
    <property type="match status" value="1"/>
</dbReference>
<dbReference type="Pfam" id="PF03255">
    <property type="entry name" value="ACCA"/>
    <property type="match status" value="1"/>
</dbReference>
<dbReference type="PRINTS" id="PR01069">
    <property type="entry name" value="ACCCTRFRASEA"/>
</dbReference>
<dbReference type="SUPFAM" id="SSF52096">
    <property type="entry name" value="ClpP/crotonase"/>
    <property type="match status" value="1"/>
</dbReference>
<dbReference type="PROSITE" id="PS50989">
    <property type="entry name" value="COA_CT_CTER"/>
    <property type="match status" value="1"/>
</dbReference>
<proteinExistence type="inferred from homology"/>
<reference key="1">
    <citation type="journal article" date="2008" name="J. Bacteriol.">
        <title>Insights into the environmental resistance gene pool from the genome sequence of the multidrug-resistant environmental isolate Escherichia coli SMS-3-5.</title>
        <authorList>
            <person name="Fricke W.F."/>
            <person name="Wright M.S."/>
            <person name="Lindell A.H."/>
            <person name="Harkins D.M."/>
            <person name="Baker-Austin C."/>
            <person name="Ravel J."/>
            <person name="Stepanauskas R."/>
        </authorList>
    </citation>
    <scope>NUCLEOTIDE SEQUENCE [LARGE SCALE GENOMIC DNA]</scope>
    <source>
        <strain>SMS-3-5 / SECEC</strain>
    </source>
</reference>
<gene>
    <name evidence="1" type="primary">accA</name>
    <name type="ordered locus">EcSMS35_0196</name>
</gene>
<sequence>MSLNFLDFEQPIAELEAKIDSLTAVSRQDEKLDINIDEEVHRLREKSVELTRKIFADLGAWQIAQLARHPQRPYTLDYVRLAFDEFDELAGDRAYADDKAIVGGIARLDGRPVMIIGHQKGRETKEKIRRNFGMPAPEGYRKALRLMQMAERFKMPIITFIDTPGAYPGVGAEERGQSEAIARNLREMSRLSVPTICTVIGEGGSGGALAIGVGDKVNMLQYSTYSVISPEGCASILWKSADKAPLAAEAMGIIAPRLKELKLIDSIIPEPLGGAHRNPEAMAASLKAQLLADLADLDVLSTEDLKNRRYQRLMSYGYA</sequence>
<feature type="chain" id="PRO_1000134489" description="Acetyl-coenzyme A carboxylase carboxyl transferase subunit alpha">
    <location>
        <begin position="1"/>
        <end position="319"/>
    </location>
</feature>
<feature type="domain" description="CoA carboxyltransferase C-terminal" evidence="2">
    <location>
        <begin position="35"/>
        <end position="296"/>
    </location>
</feature>
<evidence type="ECO:0000255" key="1">
    <source>
        <dbReference type="HAMAP-Rule" id="MF_00823"/>
    </source>
</evidence>
<evidence type="ECO:0000255" key="2">
    <source>
        <dbReference type="PROSITE-ProRule" id="PRU01137"/>
    </source>
</evidence>